<reference key="1">
    <citation type="journal article" date="2005" name="Nature">
        <title>Genome sequencing and analysis of Aspergillus oryzae.</title>
        <authorList>
            <person name="Machida M."/>
            <person name="Asai K."/>
            <person name="Sano M."/>
            <person name="Tanaka T."/>
            <person name="Kumagai T."/>
            <person name="Terai G."/>
            <person name="Kusumoto K."/>
            <person name="Arima T."/>
            <person name="Akita O."/>
            <person name="Kashiwagi Y."/>
            <person name="Abe K."/>
            <person name="Gomi K."/>
            <person name="Horiuchi H."/>
            <person name="Kitamoto K."/>
            <person name="Kobayashi T."/>
            <person name="Takeuchi M."/>
            <person name="Denning D.W."/>
            <person name="Galagan J.E."/>
            <person name="Nierman W.C."/>
            <person name="Yu J."/>
            <person name="Archer D.B."/>
            <person name="Bennett J.W."/>
            <person name="Bhatnagar D."/>
            <person name="Cleveland T.E."/>
            <person name="Fedorova N.D."/>
            <person name="Gotoh O."/>
            <person name="Horikawa H."/>
            <person name="Hosoyama A."/>
            <person name="Ichinomiya M."/>
            <person name="Igarashi R."/>
            <person name="Iwashita K."/>
            <person name="Juvvadi P.R."/>
            <person name="Kato M."/>
            <person name="Kato Y."/>
            <person name="Kin T."/>
            <person name="Kokubun A."/>
            <person name="Maeda H."/>
            <person name="Maeyama N."/>
            <person name="Maruyama J."/>
            <person name="Nagasaki H."/>
            <person name="Nakajima T."/>
            <person name="Oda K."/>
            <person name="Okada K."/>
            <person name="Paulsen I."/>
            <person name="Sakamoto K."/>
            <person name="Sawano T."/>
            <person name="Takahashi M."/>
            <person name="Takase K."/>
            <person name="Terabayashi Y."/>
            <person name="Wortman J.R."/>
            <person name="Yamada O."/>
            <person name="Yamagata Y."/>
            <person name="Anazawa H."/>
            <person name="Hata Y."/>
            <person name="Koide Y."/>
            <person name="Komori T."/>
            <person name="Koyama Y."/>
            <person name="Minetoki T."/>
            <person name="Suharnan S."/>
            <person name="Tanaka A."/>
            <person name="Isono K."/>
            <person name="Kuhara S."/>
            <person name="Ogasawara N."/>
            <person name="Kikuchi H."/>
        </authorList>
    </citation>
    <scope>NUCLEOTIDE SEQUENCE [LARGE SCALE GENOMIC DNA]</scope>
    <source>
        <strain>ATCC 42149 / RIB 40</strain>
    </source>
</reference>
<feature type="chain" id="PRO_0000366354" description="Eukaryotic translation initiation factor 3 subunit A">
    <location>
        <begin position="1"/>
        <end position="1038"/>
    </location>
</feature>
<feature type="domain" description="PCI" evidence="2">
    <location>
        <begin position="339"/>
        <end position="523"/>
    </location>
</feature>
<feature type="region of interest" description="Disordered" evidence="3">
    <location>
        <begin position="621"/>
        <end position="641"/>
    </location>
</feature>
<feature type="region of interest" description="Disordered" evidence="3">
    <location>
        <begin position="800"/>
        <end position="1038"/>
    </location>
</feature>
<feature type="coiled-coil region" evidence="1">
    <location>
        <begin position="92"/>
        <end position="121"/>
    </location>
</feature>
<feature type="coiled-coil region" evidence="1">
    <location>
        <begin position="611"/>
        <end position="899"/>
    </location>
</feature>
<feature type="compositionally biased region" description="Basic and acidic residues" evidence="3">
    <location>
        <begin position="621"/>
        <end position="632"/>
    </location>
</feature>
<feature type="compositionally biased region" description="Basic and acidic residues" evidence="3">
    <location>
        <begin position="800"/>
        <end position="901"/>
    </location>
</feature>
<feature type="compositionally biased region" description="Low complexity" evidence="3">
    <location>
        <begin position="943"/>
        <end position="952"/>
    </location>
</feature>
<feature type="compositionally biased region" description="Low complexity" evidence="3">
    <location>
        <begin position="976"/>
        <end position="993"/>
    </location>
</feature>
<feature type="compositionally biased region" description="Polar residues" evidence="3">
    <location>
        <begin position="1002"/>
        <end position="1019"/>
    </location>
</feature>
<evidence type="ECO:0000255" key="1">
    <source>
        <dbReference type="HAMAP-Rule" id="MF_03000"/>
    </source>
</evidence>
<evidence type="ECO:0000255" key="2">
    <source>
        <dbReference type="PROSITE-ProRule" id="PRU01185"/>
    </source>
</evidence>
<evidence type="ECO:0000256" key="3">
    <source>
        <dbReference type="SAM" id="MobiDB-lite"/>
    </source>
</evidence>
<organism>
    <name type="scientific">Aspergillus oryzae (strain ATCC 42149 / RIB 40)</name>
    <name type="common">Yellow koji mold</name>
    <dbReference type="NCBI Taxonomy" id="510516"/>
    <lineage>
        <taxon>Eukaryota</taxon>
        <taxon>Fungi</taxon>
        <taxon>Dikarya</taxon>
        <taxon>Ascomycota</taxon>
        <taxon>Pezizomycotina</taxon>
        <taxon>Eurotiomycetes</taxon>
        <taxon>Eurotiomycetidae</taxon>
        <taxon>Eurotiales</taxon>
        <taxon>Aspergillaceae</taxon>
        <taxon>Aspergillus</taxon>
        <taxon>Aspergillus subgen. Circumdati</taxon>
    </lineage>
</organism>
<sequence length="1038" mass="118341">MPPPPHIKPENVLKRAQELIAVGQAPAALNVLHEHVTSKRTRSSPIVSLEPVMLLFVELCVDLRKGKAAKDGLYQYKNIAQNTNVATIEVVLKKFIELAEKKVTEAQAKADEIQSSLESAAPSSNVEDLEAIETPETILLATVSGEQSRDRTDRAVVTPWLKFLWETYRTVLEILKNNARLEVMYQTTALQAFQFCLKYTRKTEFRRLCELLRNHVQNAAKYSAQMHAINLSDPDTLQRHLDTRFQQLNVAVELELWQEAFRSIEDIHTLLSLSKRPAKNVMMANYYEKLARIFLVSENYLFHAAAWSRYYNLLRQSAATLAAGQGTKKENPSVTDADMTKAVSFVLLSALAIPVISTSRSRGALVDVDEVRKNKNTRLTNLLGMAQSPTRAVLFKDALNKGLLKRARPEIRDLYNILEVDFHPLSICKKITPILKQIGADPEMEKYVVPLQQVILTRLFQQLSQVYESVSLKFVYELAQFPDPFQVTPAMIEKFIMNGCKKGDLAIRVDHISGVLTFDTDVFSSAKALHSGSAAGSAESEVGSVQRMQNTPAEIARLQLTRLAKTLHVSCMYVDPSYHEARLQAKQAAQTRAAAGAAKEHEETLARRVIIDKKKEAATDALQRKQREEETRKRIRTQQLQEAEKQRLLDEQREREKKRIKDEQDRIREQELKKQIEELKSGVKGIDLSEVDLKDLDANRLRAMKLAQLEKEKNELNDRIRTTGKRIDHLERAFRREELKHIPADYEAQKKRDMELYEALKAETLKEAEDKHKEAVALKHRLSRLVPVFNNFRKEVSEKRHEEFERRRKAAERDFEAKKKQRIKEVQDRRRRERAEREEAERRQKEEEERIKREEEERAAKEEERRRVLAEEKAKREEERKKLDEIALKQKQREEEAEARRASRKTGFPEPPARAEPERTAPRLNLAPRTGGGPSWRERQAAKEAAGGAAPEPAKEEPAAQPPRRTGGYVPPHLRGASAAAPAAPPSNGAAPSRYVPPSARDSGSSTPPSRTQTPATTSEEPKSAGKWVPRWKQQQGQ</sequence>
<accession>Q2UKG6</accession>
<protein>
    <recommendedName>
        <fullName evidence="1">Eukaryotic translation initiation factor 3 subunit A</fullName>
        <shortName evidence="1">eIF3a</shortName>
    </recommendedName>
    <alternativeName>
        <fullName evidence="1">Eukaryotic translation initiation factor 3 110 kDa subunit homolog</fullName>
        <shortName evidence="1">eIF3 p110</shortName>
    </alternativeName>
    <alternativeName>
        <fullName evidence="1">Translation initiation factor eIF3, p110 subunit homolog</fullName>
    </alternativeName>
</protein>
<proteinExistence type="inferred from homology"/>
<gene>
    <name type="primary">tif32</name>
    <name type="ORF">AO090003000816</name>
</gene>
<dbReference type="EMBL" id="BA000050">
    <property type="protein sequence ID" value="BAE57949.1"/>
    <property type="molecule type" value="Genomic_DNA"/>
</dbReference>
<dbReference type="RefSeq" id="XP_001819951.1">
    <property type="nucleotide sequence ID" value="XM_001819899.2"/>
</dbReference>
<dbReference type="SMR" id="Q2UKG6"/>
<dbReference type="STRING" id="510516.Q2UKG6"/>
<dbReference type="EnsemblFungi" id="BAE57949">
    <property type="protein sequence ID" value="BAE57949"/>
    <property type="gene ID" value="AO090003000816"/>
</dbReference>
<dbReference type="GeneID" id="5991934"/>
<dbReference type="KEGG" id="aor:AO090003000816"/>
<dbReference type="VEuPathDB" id="FungiDB:AO090003000816"/>
<dbReference type="HOGENOM" id="CLU_002096_2_1_1"/>
<dbReference type="OMA" id="EHITNKR"/>
<dbReference type="OrthoDB" id="122758at5052"/>
<dbReference type="Proteomes" id="UP000006564">
    <property type="component" value="Chromosome 2"/>
</dbReference>
<dbReference type="GO" id="GO:0010494">
    <property type="term" value="C:cytoplasmic stress granule"/>
    <property type="evidence" value="ECO:0007669"/>
    <property type="project" value="EnsemblFungi"/>
</dbReference>
<dbReference type="GO" id="GO:0016282">
    <property type="term" value="C:eukaryotic 43S preinitiation complex"/>
    <property type="evidence" value="ECO:0007669"/>
    <property type="project" value="UniProtKB-UniRule"/>
</dbReference>
<dbReference type="GO" id="GO:0033290">
    <property type="term" value="C:eukaryotic 48S preinitiation complex"/>
    <property type="evidence" value="ECO:0007669"/>
    <property type="project" value="UniProtKB-UniRule"/>
</dbReference>
<dbReference type="GO" id="GO:0071540">
    <property type="term" value="C:eukaryotic translation initiation factor 3 complex, eIF3e"/>
    <property type="evidence" value="ECO:0007669"/>
    <property type="project" value="EnsemblFungi"/>
</dbReference>
<dbReference type="GO" id="GO:0071541">
    <property type="term" value="C:eukaryotic translation initiation factor 3 complex, eIF3m"/>
    <property type="evidence" value="ECO:0007669"/>
    <property type="project" value="EnsemblFungi"/>
</dbReference>
<dbReference type="GO" id="GO:0043614">
    <property type="term" value="C:multi-eIF complex"/>
    <property type="evidence" value="ECO:0007669"/>
    <property type="project" value="TreeGrafter"/>
</dbReference>
<dbReference type="GO" id="GO:0003729">
    <property type="term" value="F:mRNA binding"/>
    <property type="evidence" value="ECO:0007669"/>
    <property type="project" value="TreeGrafter"/>
</dbReference>
<dbReference type="GO" id="GO:0003743">
    <property type="term" value="F:translation initiation factor activity"/>
    <property type="evidence" value="ECO:0007669"/>
    <property type="project" value="UniProtKB-UniRule"/>
</dbReference>
<dbReference type="GO" id="GO:0001732">
    <property type="term" value="P:formation of cytoplasmic translation initiation complex"/>
    <property type="evidence" value="ECO:0007669"/>
    <property type="project" value="UniProtKB-UniRule"/>
</dbReference>
<dbReference type="GO" id="GO:0002188">
    <property type="term" value="P:translation reinitiation"/>
    <property type="evidence" value="ECO:0007669"/>
    <property type="project" value="TreeGrafter"/>
</dbReference>
<dbReference type="FunFam" id="1.25.40.860:FF:000003">
    <property type="entry name" value="Eukaryotic translation initiation factor 3 subunit A"/>
    <property type="match status" value="1"/>
</dbReference>
<dbReference type="FunFam" id="1.25.40.860:FF:000005">
    <property type="entry name" value="Eukaryotic translation initiation factor 3 subunit A"/>
    <property type="match status" value="1"/>
</dbReference>
<dbReference type="FunFam" id="4.10.860.10:FF:000001">
    <property type="entry name" value="Eukaryotic translation initiation factor 3 subunit A"/>
    <property type="match status" value="1"/>
</dbReference>
<dbReference type="Gene3D" id="1.25.40.860">
    <property type="match status" value="2"/>
</dbReference>
<dbReference type="Gene3D" id="4.10.860.10">
    <property type="entry name" value="UVR domain"/>
    <property type="match status" value="1"/>
</dbReference>
<dbReference type="HAMAP" id="MF_03000">
    <property type="entry name" value="eIF3a"/>
    <property type="match status" value="1"/>
</dbReference>
<dbReference type="InterPro" id="IPR027512">
    <property type="entry name" value="EIF3A"/>
</dbReference>
<dbReference type="InterPro" id="IPR054711">
    <property type="entry name" value="eIF3a_PCI_TPR-like"/>
</dbReference>
<dbReference type="InterPro" id="IPR000717">
    <property type="entry name" value="PCI_dom"/>
</dbReference>
<dbReference type="PANTHER" id="PTHR14005:SF0">
    <property type="entry name" value="EUKARYOTIC TRANSLATION INITIATION FACTOR 3 SUBUNIT A"/>
    <property type="match status" value="1"/>
</dbReference>
<dbReference type="PANTHER" id="PTHR14005">
    <property type="entry name" value="EUKARYOTIC TRANSLATION INITIATION FACTOR 3, THETA SUBUNIT"/>
    <property type="match status" value="1"/>
</dbReference>
<dbReference type="Pfam" id="PF22591">
    <property type="entry name" value="eIF3a_PCI_TPR-like"/>
    <property type="match status" value="1"/>
</dbReference>
<dbReference type="Pfam" id="PF01399">
    <property type="entry name" value="PCI"/>
    <property type="match status" value="1"/>
</dbReference>
<dbReference type="SMART" id="SM00088">
    <property type="entry name" value="PINT"/>
    <property type="match status" value="1"/>
</dbReference>
<dbReference type="PROSITE" id="PS50250">
    <property type="entry name" value="PCI"/>
    <property type="match status" value="1"/>
</dbReference>
<name>EIF3A_ASPOR</name>
<keyword id="KW-0175">Coiled coil</keyword>
<keyword id="KW-0963">Cytoplasm</keyword>
<keyword id="KW-0396">Initiation factor</keyword>
<keyword id="KW-0648">Protein biosynthesis</keyword>
<keyword id="KW-1185">Reference proteome</keyword>
<keyword id="KW-0694">RNA-binding</keyword>
<comment type="function">
    <text evidence="1">RNA-binding component of the eukaryotic translation initiation factor 3 (eIF-3) complex, which is involved in protein synthesis of a specialized repertoire of mRNAs and, together with other initiation factors, stimulates binding of mRNA and methionyl-tRNAi to the 40S ribosome. The eIF-3 complex specifically targets and initiates translation of a subset of mRNAs involved in cell proliferation.</text>
</comment>
<comment type="subunit">
    <text evidence="1">Component of the eukaryotic translation initiation factor 3 (eIF-3) complex.</text>
</comment>
<comment type="subcellular location">
    <subcellularLocation>
        <location evidence="1">Cytoplasm</location>
    </subcellularLocation>
</comment>
<comment type="similarity">
    <text evidence="1">Belongs to the eIF-3 subunit A family.</text>
</comment>